<reference key="1">
    <citation type="journal article" date="2008" name="Environ. Microbiol.">
        <title>The genome of Erwinia tasmaniensis strain Et1/99, a non-pathogenic bacterium in the genus Erwinia.</title>
        <authorList>
            <person name="Kube M."/>
            <person name="Migdoll A.M."/>
            <person name="Mueller I."/>
            <person name="Kuhl H."/>
            <person name="Beck A."/>
            <person name="Reinhardt R."/>
            <person name="Geider K."/>
        </authorList>
    </citation>
    <scope>NUCLEOTIDE SEQUENCE [LARGE SCALE GENOMIC DNA]</scope>
    <source>
        <strain>DSM 17950 / CFBP 7177 / CIP 109463 / NCPPB 4357 / Et1/99</strain>
    </source>
</reference>
<comment type="function">
    <text evidence="1">Produces ATP from ADP in the presence of a proton gradient across the membrane. The catalytic sites are hosted primarily by the beta subunits.</text>
</comment>
<comment type="catalytic activity">
    <reaction evidence="1">
        <text>ATP + H2O + 4 H(+)(in) = ADP + phosphate + 5 H(+)(out)</text>
        <dbReference type="Rhea" id="RHEA:57720"/>
        <dbReference type="ChEBI" id="CHEBI:15377"/>
        <dbReference type="ChEBI" id="CHEBI:15378"/>
        <dbReference type="ChEBI" id="CHEBI:30616"/>
        <dbReference type="ChEBI" id="CHEBI:43474"/>
        <dbReference type="ChEBI" id="CHEBI:456216"/>
        <dbReference type="EC" id="7.1.2.2"/>
    </reaction>
</comment>
<comment type="subunit">
    <text evidence="1">F-type ATPases have 2 components, CF(1) - the catalytic core - and CF(0) - the membrane proton channel. CF(1) has five subunits: alpha(3), beta(3), gamma(1), delta(1), epsilon(1). CF(0) has three main subunits: a(1), b(2) and c(9-12). The alpha and beta chains form an alternating ring which encloses part of the gamma chain. CF(1) is attached to CF(0) by a central stalk formed by the gamma and epsilon chains, while a peripheral stalk is formed by the delta and b chains.</text>
</comment>
<comment type="subcellular location">
    <subcellularLocation>
        <location evidence="1">Cell inner membrane</location>
        <topology evidence="1">Peripheral membrane protein</topology>
    </subcellularLocation>
</comment>
<comment type="similarity">
    <text evidence="1">Belongs to the ATPase alpha/beta chains family.</text>
</comment>
<evidence type="ECO:0000255" key="1">
    <source>
        <dbReference type="HAMAP-Rule" id="MF_01347"/>
    </source>
</evidence>
<organism>
    <name type="scientific">Erwinia tasmaniensis (strain DSM 17950 / CFBP 7177 / CIP 109463 / NCPPB 4357 / Et1/99)</name>
    <dbReference type="NCBI Taxonomy" id="465817"/>
    <lineage>
        <taxon>Bacteria</taxon>
        <taxon>Pseudomonadati</taxon>
        <taxon>Pseudomonadota</taxon>
        <taxon>Gammaproteobacteria</taxon>
        <taxon>Enterobacterales</taxon>
        <taxon>Erwiniaceae</taxon>
        <taxon>Erwinia</taxon>
    </lineage>
</organism>
<keyword id="KW-0066">ATP synthesis</keyword>
<keyword id="KW-0067">ATP-binding</keyword>
<keyword id="KW-0997">Cell inner membrane</keyword>
<keyword id="KW-1003">Cell membrane</keyword>
<keyword id="KW-0139">CF(1)</keyword>
<keyword id="KW-0375">Hydrogen ion transport</keyword>
<keyword id="KW-0406">Ion transport</keyword>
<keyword id="KW-0472">Membrane</keyword>
<keyword id="KW-0547">Nucleotide-binding</keyword>
<keyword id="KW-1185">Reference proteome</keyword>
<keyword id="KW-1278">Translocase</keyword>
<keyword id="KW-0813">Transport</keyword>
<gene>
    <name evidence="1" type="primary">atpD</name>
    <name type="ordered locus">ETA_34750</name>
</gene>
<proteinExistence type="inferred from homology"/>
<name>ATPB_ERWT9</name>
<dbReference type="EC" id="7.1.2.2" evidence="1"/>
<dbReference type="EMBL" id="CU468135">
    <property type="protein sequence ID" value="CAO98521.1"/>
    <property type="molecule type" value="Genomic_DNA"/>
</dbReference>
<dbReference type="RefSeq" id="WP_012443141.1">
    <property type="nucleotide sequence ID" value="NC_010694.1"/>
</dbReference>
<dbReference type="SMR" id="B2VCA4"/>
<dbReference type="STRING" id="465817.ETA_34750"/>
<dbReference type="KEGG" id="eta:ETA_34750"/>
<dbReference type="eggNOG" id="COG0055">
    <property type="taxonomic scope" value="Bacteria"/>
</dbReference>
<dbReference type="HOGENOM" id="CLU_022398_0_2_6"/>
<dbReference type="OrthoDB" id="9801639at2"/>
<dbReference type="Proteomes" id="UP000001726">
    <property type="component" value="Chromosome"/>
</dbReference>
<dbReference type="GO" id="GO:0005886">
    <property type="term" value="C:plasma membrane"/>
    <property type="evidence" value="ECO:0007669"/>
    <property type="project" value="UniProtKB-SubCell"/>
</dbReference>
<dbReference type="GO" id="GO:0045259">
    <property type="term" value="C:proton-transporting ATP synthase complex"/>
    <property type="evidence" value="ECO:0007669"/>
    <property type="project" value="UniProtKB-KW"/>
</dbReference>
<dbReference type="GO" id="GO:0005524">
    <property type="term" value="F:ATP binding"/>
    <property type="evidence" value="ECO:0007669"/>
    <property type="project" value="UniProtKB-UniRule"/>
</dbReference>
<dbReference type="GO" id="GO:0016887">
    <property type="term" value="F:ATP hydrolysis activity"/>
    <property type="evidence" value="ECO:0007669"/>
    <property type="project" value="InterPro"/>
</dbReference>
<dbReference type="GO" id="GO:0046933">
    <property type="term" value="F:proton-transporting ATP synthase activity, rotational mechanism"/>
    <property type="evidence" value="ECO:0007669"/>
    <property type="project" value="UniProtKB-UniRule"/>
</dbReference>
<dbReference type="CDD" id="cd18110">
    <property type="entry name" value="ATP-synt_F1_beta_C"/>
    <property type="match status" value="1"/>
</dbReference>
<dbReference type="CDD" id="cd18115">
    <property type="entry name" value="ATP-synt_F1_beta_N"/>
    <property type="match status" value="1"/>
</dbReference>
<dbReference type="CDD" id="cd01133">
    <property type="entry name" value="F1-ATPase_beta_CD"/>
    <property type="match status" value="1"/>
</dbReference>
<dbReference type="FunFam" id="1.10.1140.10:FF:000001">
    <property type="entry name" value="ATP synthase subunit beta"/>
    <property type="match status" value="1"/>
</dbReference>
<dbReference type="FunFam" id="2.40.10.170:FF:000003">
    <property type="entry name" value="ATP synthase subunit beta"/>
    <property type="match status" value="1"/>
</dbReference>
<dbReference type="FunFam" id="3.40.50.300:FF:000004">
    <property type="entry name" value="ATP synthase subunit beta"/>
    <property type="match status" value="1"/>
</dbReference>
<dbReference type="Gene3D" id="2.40.10.170">
    <property type="match status" value="1"/>
</dbReference>
<dbReference type="Gene3D" id="1.10.1140.10">
    <property type="entry name" value="Bovine Mitochondrial F1-atpase, Atp Synthase Beta Chain, Chain D, domain 3"/>
    <property type="match status" value="1"/>
</dbReference>
<dbReference type="Gene3D" id="3.40.50.300">
    <property type="entry name" value="P-loop containing nucleotide triphosphate hydrolases"/>
    <property type="match status" value="1"/>
</dbReference>
<dbReference type="HAMAP" id="MF_01347">
    <property type="entry name" value="ATP_synth_beta_bact"/>
    <property type="match status" value="1"/>
</dbReference>
<dbReference type="InterPro" id="IPR003593">
    <property type="entry name" value="AAA+_ATPase"/>
</dbReference>
<dbReference type="InterPro" id="IPR055190">
    <property type="entry name" value="ATP-synt_VA_C"/>
</dbReference>
<dbReference type="InterPro" id="IPR005722">
    <property type="entry name" value="ATP_synth_F1_bsu"/>
</dbReference>
<dbReference type="InterPro" id="IPR020003">
    <property type="entry name" value="ATPase_a/bsu_AS"/>
</dbReference>
<dbReference type="InterPro" id="IPR050053">
    <property type="entry name" value="ATPase_alpha/beta_chains"/>
</dbReference>
<dbReference type="InterPro" id="IPR004100">
    <property type="entry name" value="ATPase_F1/V1/A1_a/bsu_N"/>
</dbReference>
<dbReference type="InterPro" id="IPR036121">
    <property type="entry name" value="ATPase_F1/V1/A1_a/bsu_N_sf"/>
</dbReference>
<dbReference type="InterPro" id="IPR000194">
    <property type="entry name" value="ATPase_F1/V1/A1_a/bsu_nucl-bd"/>
</dbReference>
<dbReference type="InterPro" id="IPR024034">
    <property type="entry name" value="ATPase_F1/V1_b/a_C"/>
</dbReference>
<dbReference type="InterPro" id="IPR027417">
    <property type="entry name" value="P-loop_NTPase"/>
</dbReference>
<dbReference type="NCBIfam" id="TIGR01039">
    <property type="entry name" value="atpD"/>
    <property type="match status" value="1"/>
</dbReference>
<dbReference type="PANTHER" id="PTHR15184">
    <property type="entry name" value="ATP SYNTHASE"/>
    <property type="match status" value="1"/>
</dbReference>
<dbReference type="PANTHER" id="PTHR15184:SF71">
    <property type="entry name" value="ATP SYNTHASE SUBUNIT BETA, MITOCHONDRIAL"/>
    <property type="match status" value="1"/>
</dbReference>
<dbReference type="Pfam" id="PF00006">
    <property type="entry name" value="ATP-synt_ab"/>
    <property type="match status" value="1"/>
</dbReference>
<dbReference type="Pfam" id="PF02874">
    <property type="entry name" value="ATP-synt_ab_N"/>
    <property type="match status" value="1"/>
</dbReference>
<dbReference type="Pfam" id="PF22919">
    <property type="entry name" value="ATP-synt_VA_C"/>
    <property type="match status" value="1"/>
</dbReference>
<dbReference type="SMART" id="SM00382">
    <property type="entry name" value="AAA"/>
    <property type="match status" value="1"/>
</dbReference>
<dbReference type="SUPFAM" id="SSF47917">
    <property type="entry name" value="C-terminal domain of alpha and beta subunits of F1 ATP synthase"/>
    <property type="match status" value="1"/>
</dbReference>
<dbReference type="SUPFAM" id="SSF50615">
    <property type="entry name" value="N-terminal domain of alpha and beta subunits of F1 ATP synthase"/>
    <property type="match status" value="1"/>
</dbReference>
<dbReference type="SUPFAM" id="SSF52540">
    <property type="entry name" value="P-loop containing nucleoside triphosphate hydrolases"/>
    <property type="match status" value="1"/>
</dbReference>
<dbReference type="PROSITE" id="PS00152">
    <property type="entry name" value="ATPASE_ALPHA_BETA"/>
    <property type="match status" value="1"/>
</dbReference>
<sequence>MATGKIVQVIGAVVDVEFPQDAVPQVYSALEVKNGDARLVLEVQQQLGGGVVRTIAMGSSDGLKRGLETVDLQHPIEVPVGTATLGRIMNVLGEPIDMKGDIGEEERWAIHRSAPSYEDQSNSQDLLETGIKVIDLMCPFAKGGKVGLFGGAGVGKTVNMMELIRNIAAEHSGFSVFAGVGERTREGNDFYHEMTDSNVIDKVSLVYGQMNEPPGNRLRVALTGLTMAEKFRDEGRDVLLFIDNIYRYTLAGTEVSALLGRMPSAVGYQPTLAEEMGVLQERITSTKTGSITSVQAVYVPADDLTDPSPATTFAHLDATVVLSRQIASLGIYPAVDPLDSTSRQLDPLVVGQEHYDTARGVQSLLQRYQELKDIIAILGMDELSEEDKLVVARSRKMQRFLSQPFFVAEVFTGSPGKYVSLKDTIRGFKGIMDGEFDHLPEQAFYMVGSIEEAVEKAKKL</sequence>
<feature type="chain" id="PRO_1000143507" description="ATP synthase subunit beta">
    <location>
        <begin position="1"/>
        <end position="460"/>
    </location>
</feature>
<feature type="binding site" evidence="1">
    <location>
        <begin position="150"/>
        <end position="157"/>
    </location>
    <ligand>
        <name>ATP</name>
        <dbReference type="ChEBI" id="CHEBI:30616"/>
    </ligand>
</feature>
<protein>
    <recommendedName>
        <fullName evidence="1">ATP synthase subunit beta</fullName>
        <ecNumber evidence="1">7.1.2.2</ecNumber>
    </recommendedName>
    <alternativeName>
        <fullName evidence="1">ATP synthase F1 sector subunit beta</fullName>
    </alternativeName>
    <alternativeName>
        <fullName evidence="1">F-ATPase subunit beta</fullName>
    </alternativeName>
</protein>
<accession>B2VCA4</accession>